<name>TATB_CORDI</name>
<accession>Q6NHY4</accession>
<reference key="1">
    <citation type="journal article" date="2003" name="Nucleic Acids Res.">
        <title>The complete genome sequence and analysis of Corynebacterium diphtheriae NCTC13129.</title>
        <authorList>
            <person name="Cerdeno-Tarraga A.-M."/>
            <person name="Efstratiou A."/>
            <person name="Dover L.G."/>
            <person name="Holden M.T.G."/>
            <person name="Pallen M.J."/>
            <person name="Bentley S.D."/>
            <person name="Besra G.S."/>
            <person name="Churcher C.M."/>
            <person name="James K.D."/>
            <person name="De Zoysa A."/>
            <person name="Chillingworth T."/>
            <person name="Cronin A."/>
            <person name="Dowd L."/>
            <person name="Feltwell T."/>
            <person name="Hamlin N."/>
            <person name="Holroyd S."/>
            <person name="Jagels K."/>
            <person name="Moule S."/>
            <person name="Quail M.A."/>
            <person name="Rabbinowitsch E."/>
            <person name="Rutherford K.M."/>
            <person name="Thomson N.R."/>
            <person name="Unwin L."/>
            <person name="Whitehead S."/>
            <person name="Barrell B.G."/>
            <person name="Parkhill J."/>
        </authorList>
    </citation>
    <scope>NUCLEOTIDE SEQUENCE [LARGE SCALE GENOMIC DNA]</scope>
    <source>
        <strain>ATCC 700971 / NCTC 13129 / Biotype gravis</strain>
    </source>
</reference>
<sequence length="147" mass="16199">MFSSIGWPEIFTVLILGLIIIGPERLPKVIEDVRAAIYAAKKAINNAKEELNGNLGAEFDEFREPINKIASIQRMGPKAVLTKALFDEDENFMDNFDPKKIMASGTEGEAYRERGINPQPAGDSASPQTPSNKESQPKAGFSWDDIT</sequence>
<dbReference type="EMBL" id="BX248356">
    <property type="protein sequence ID" value="CAE49514.1"/>
    <property type="molecule type" value="Genomic_DNA"/>
</dbReference>
<dbReference type="RefSeq" id="WP_010934727.1">
    <property type="nucleotide sequence ID" value="NC_002935.2"/>
</dbReference>
<dbReference type="SMR" id="Q6NHY4"/>
<dbReference type="STRING" id="257309.DIP0996"/>
<dbReference type="KEGG" id="cdi:DIP0996"/>
<dbReference type="HOGENOM" id="CLU_086034_2_0_11"/>
<dbReference type="Proteomes" id="UP000002198">
    <property type="component" value="Chromosome"/>
</dbReference>
<dbReference type="GO" id="GO:0033281">
    <property type="term" value="C:TAT protein transport complex"/>
    <property type="evidence" value="ECO:0007669"/>
    <property type="project" value="UniProtKB-UniRule"/>
</dbReference>
<dbReference type="GO" id="GO:0008320">
    <property type="term" value="F:protein transmembrane transporter activity"/>
    <property type="evidence" value="ECO:0007669"/>
    <property type="project" value="UniProtKB-UniRule"/>
</dbReference>
<dbReference type="GO" id="GO:0043953">
    <property type="term" value="P:protein transport by the Tat complex"/>
    <property type="evidence" value="ECO:0007669"/>
    <property type="project" value="UniProtKB-UniRule"/>
</dbReference>
<dbReference type="Gene3D" id="1.20.5.3310">
    <property type="match status" value="1"/>
</dbReference>
<dbReference type="HAMAP" id="MF_00237">
    <property type="entry name" value="TatB"/>
    <property type="match status" value="1"/>
</dbReference>
<dbReference type="InterPro" id="IPR018448">
    <property type="entry name" value="TatB"/>
</dbReference>
<dbReference type="NCBIfam" id="NF001212">
    <property type="entry name" value="PRK00182.1"/>
    <property type="match status" value="1"/>
</dbReference>
<dbReference type="PRINTS" id="PR01506">
    <property type="entry name" value="TATBPROTEIN"/>
</dbReference>
<feature type="chain" id="PRO_0000301162" description="Sec-independent protein translocase protein TatB">
    <location>
        <begin position="1"/>
        <end position="147"/>
    </location>
</feature>
<feature type="transmembrane region" description="Helical" evidence="1">
    <location>
        <begin position="2"/>
        <end position="22"/>
    </location>
</feature>
<feature type="region of interest" description="Disordered" evidence="2">
    <location>
        <begin position="96"/>
        <end position="147"/>
    </location>
</feature>
<feature type="compositionally biased region" description="Polar residues" evidence="2">
    <location>
        <begin position="125"/>
        <end position="134"/>
    </location>
</feature>
<keyword id="KW-1003">Cell membrane</keyword>
<keyword id="KW-0472">Membrane</keyword>
<keyword id="KW-0653">Protein transport</keyword>
<keyword id="KW-1185">Reference proteome</keyword>
<keyword id="KW-0811">Translocation</keyword>
<keyword id="KW-0812">Transmembrane</keyword>
<keyword id="KW-1133">Transmembrane helix</keyword>
<keyword id="KW-0813">Transport</keyword>
<evidence type="ECO:0000255" key="1">
    <source>
        <dbReference type="HAMAP-Rule" id="MF_00237"/>
    </source>
</evidence>
<evidence type="ECO:0000256" key="2">
    <source>
        <dbReference type="SAM" id="MobiDB-lite"/>
    </source>
</evidence>
<protein>
    <recommendedName>
        <fullName evidence="1">Sec-independent protein translocase protein TatB</fullName>
    </recommendedName>
</protein>
<organism>
    <name type="scientific">Corynebacterium diphtheriae (strain ATCC 700971 / NCTC 13129 / Biotype gravis)</name>
    <dbReference type="NCBI Taxonomy" id="257309"/>
    <lineage>
        <taxon>Bacteria</taxon>
        <taxon>Bacillati</taxon>
        <taxon>Actinomycetota</taxon>
        <taxon>Actinomycetes</taxon>
        <taxon>Mycobacteriales</taxon>
        <taxon>Corynebacteriaceae</taxon>
        <taxon>Corynebacterium</taxon>
    </lineage>
</organism>
<proteinExistence type="inferred from homology"/>
<gene>
    <name evidence="1" type="primary">tatB</name>
    <name type="ordered locus">DIP0996</name>
</gene>
<comment type="function">
    <text evidence="1">Part of the twin-arginine translocation (Tat) system that transports large folded proteins containing a characteristic twin-arginine motif in their signal peptide across membranes. Together with TatC, TatB is part of a receptor directly interacting with Tat signal peptides. TatB may form an oligomeric binding site that transiently accommodates folded Tat precursor proteins before their translocation.</text>
</comment>
<comment type="subunit">
    <text evidence="1">The Tat system comprises two distinct complexes: a TatABC complex, containing multiple copies of TatA, TatB and TatC subunits, and a separate TatA complex, containing only TatA subunits. Substrates initially bind to the TatABC complex, which probably triggers association of the separate TatA complex to form the active translocon.</text>
</comment>
<comment type="subcellular location">
    <subcellularLocation>
        <location evidence="1">Cell membrane</location>
        <topology evidence="1">Single-pass membrane protein</topology>
    </subcellularLocation>
</comment>
<comment type="similarity">
    <text evidence="1">Belongs to the TatB family.</text>
</comment>